<organism>
    <name type="scientific">Shinella zoogloeoides</name>
    <name type="common">Crabtreella saccharophila</name>
    <dbReference type="NCBI Taxonomy" id="352475"/>
    <lineage>
        <taxon>Bacteria</taxon>
        <taxon>Pseudomonadati</taxon>
        <taxon>Pseudomonadota</taxon>
        <taxon>Alphaproteobacteria</taxon>
        <taxon>Hyphomicrobiales</taxon>
        <taxon>Rhizobiaceae</taxon>
        <taxon>Shinella</taxon>
    </lineage>
</organism>
<protein>
    <recommendedName>
        <fullName>Acetyl-CoA acetyltransferase</fullName>
        <ecNumber>2.3.1.9</ecNumber>
    </recommendedName>
    <alternativeName>
        <fullName>Acetoacetyl-CoA thiolase</fullName>
    </alternativeName>
    <alternativeName>
        <fullName evidence="6">Beta-ketothiolase</fullName>
    </alternativeName>
</protein>
<feature type="initiator methionine" description="Removed">
    <location>
        <position position="1"/>
    </location>
</feature>
<feature type="chain" id="PRO_0000206463" description="Acetyl-CoA acetyltransferase">
    <location>
        <begin position="2"/>
        <end position="392"/>
    </location>
</feature>
<feature type="active site" description="Acyl-thioester intermediate">
    <location>
        <position position="89"/>
    </location>
</feature>
<feature type="active site" description="Proton acceptor">
    <location>
        <position position="348"/>
    </location>
</feature>
<feature type="active site" description="Proton acceptor">
    <location>
        <position position="378"/>
    </location>
</feature>
<feature type="mutagenesis site" description="Slightly lower activity." evidence="4">
    <original>Q</original>
    <variation>A</variation>
    <location>
        <position position="64"/>
    </location>
</feature>
<feature type="mutagenesis site" description="Loss of activity." evidence="4">
    <original>C</original>
    <variation>A</variation>
    <location>
        <position position="89"/>
    </location>
</feature>
<feature type="mutagenesis site" description="Loss of activity." evidence="5">
    <original>C</original>
    <variation>G</variation>
    <location>
        <position position="378"/>
    </location>
</feature>
<feature type="strand" evidence="10">
    <location>
        <begin position="6"/>
        <end position="12"/>
    </location>
</feature>
<feature type="turn" evidence="10">
    <location>
        <begin position="21"/>
        <end position="24"/>
    </location>
</feature>
<feature type="helix" evidence="10">
    <location>
        <begin position="27"/>
        <end position="42"/>
    </location>
</feature>
<feature type="helix" evidence="10">
    <location>
        <begin position="46"/>
        <end position="48"/>
    </location>
</feature>
<feature type="strand" evidence="10">
    <location>
        <begin position="51"/>
        <end position="55"/>
    </location>
</feature>
<feature type="helix" evidence="10">
    <location>
        <begin position="66"/>
        <end position="73"/>
    </location>
</feature>
<feature type="strand" evidence="10">
    <location>
        <begin position="80"/>
        <end position="86"/>
    </location>
</feature>
<feature type="helix" evidence="10">
    <location>
        <begin position="88"/>
        <end position="90"/>
    </location>
</feature>
<feature type="helix" evidence="10">
    <location>
        <begin position="91"/>
        <end position="104"/>
    </location>
</feature>
<feature type="strand" evidence="10">
    <location>
        <begin position="111"/>
        <end position="119"/>
    </location>
</feature>
<feature type="strand" evidence="10">
    <location>
        <begin position="124"/>
        <end position="126"/>
    </location>
</feature>
<feature type="strand" evidence="9">
    <location>
        <begin position="133"/>
        <end position="135"/>
    </location>
</feature>
<feature type="strand" evidence="10">
    <location>
        <begin position="137"/>
        <end position="141"/>
    </location>
</feature>
<feature type="helix" evidence="10">
    <location>
        <begin position="142"/>
        <end position="147"/>
    </location>
</feature>
<feature type="turn" evidence="10">
    <location>
        <begin position="151"/>
        <end position="153"/>
    </location>
</feature>
<feature type="helix" evidence="10">
    <location>
        <begin position="157"/>
        <end position="168"/>
    </location>
</feature>
<feature type="helix" evidence="10">
    <location>
        <begin position="172"/>
        <end position="192"/>
    </location>
</feature>
<feature type="turn" evidence="10">
    <location>
        <begin position="193"/>
        <end position="198"/>
    </location>
</feature>
<feature type="strand" evidence="10">
    <location>
        <begin position="202"/>
        <end position="204"/>
    </location>
</feature>
<feature type="strand" evidence="12">
    <location>
        <begin position="207"/>
        <end position="209"/>
    </location>
</feature>
<feature type="strand" evidence="10">
    <location>
        <begin position="211"/>
        <end position="213"/>
    </location>
</feature>
<feature type="helix" evidence="10">
    <location>
        <begin position="225"/>
        <end position="229"/>
    </location>
</feature>
<feature type="strand" evidence="11">
    <location>
        <begin position="233"/>
        <end position="235"/>
    </location>
</feature>
<feature type="strand" evidence="10">
    <location>
        <begin position="243"/>
        <end position="246"/>
    </location>
</feature>
<feature type="strand" evidence="10">
    <location>
        <begin position="250"/>
        <end position="260"/>
    </location>
</feature>
<feature type="helix" evidence="10">
    <location>
        <begin position="261"/>
        <end position="267"/>
    </location>
</feature>
<feature type="strand" evidence="10">
    <location>
        <begin position="272"/>
        <end position="282"/>
    </location>
</feature>
<feature type="helix" evidence="10">
    <location>
        <begin position="285"/>
        <end position="290"/>
    </location>
</feature>
<feature type="helix" evidence="10">
    <location>
        <begin position="292"/>
        <end position="303"/>
    </location>
</feature>
<feature type="helix" evidence="10">
    <location>
        <begin position="307"/>
        <end position="309"/>
    </location>
</feature>
<feature type="strand" evidence="10">
    <location>
        <begin position="311"/>
        <end position="315"/>
    </location>
</feature>
<feature type="helix" evidence="10">
    <location>
        <begin position="320"/>
        <end position="330"/>
    </location>
</feature>
<feature type="helix" evidence="10">
    <location>
        <begin position="334"/>
        <end position="336"/>
    </location>
</feature>
<feature type="helix" evidence="10">
    <location>
        <begin position="343"/>
        <end position="346"/>
    </location>
</feature>
<feature type="helix" evidence="10">
    <location>
        <begin position="350"/>
        <end position="352"/>
    </location>
</feature>
<feature type="helix" evidence="10">
    <location>
        <begin position="353"/>
        <end position="368"/>
    </location>
</feature>
<feature type="strand" evidence="10">
    <location>
        <begin position="371"/>
        <end position="379"/>
    </location>
</feature>
<feature type="turn" evidence="10">
    <location>
        <begin position="380"/>
        <end position="382"/>
    </location>
</feature>
<feature type="strand" evidence="10">
    <location>
        <begin position="383"/>
        <end position="390"/>
    </location>
</feature>
<accession>P07097</accession>
<keyword id="KW-0002">3D-structure</keyword>
<keyword id="KW-0012">Acyltransferase</keyword>
<keyword id="KW-0963">Cytoplasm</keyword>
<keyword id="KW-0583">PHB biosynthesis</keyword>
<keyword id="KW-0808">Transferase</keyword>
<proteinExistence type="evidence at protein level"/>
<comment type="catalytic activity">
    <reaction evidence="1">
        <text>2 acetyl-CoA = acetoacetyl-CoA + CoA</text>
        <dbReference type="Rhea" id="RHEA:21036"/>
        <dbReference type="ChEBI" id="CHEBI:57286"/>
        <dbReference type="ChEBI" id="CHEBI:57287"/>
        <dbReference type="ChEBI" id="CHEBI:57288"/>
        <dbReference type="EC" id="2.3.1.9"/>
    </reaction>
</comment>
<comment type="pathway">
    <text evidence="8">Biopolymer metabolism; poly-(R)-3-hydroxybutanoate biosynthesis.</text>
</comment>
<comment type="pathway">
    <text>Metabolic intermediate biosynthesis; (R)-mevalonate biosynthesis; (R)-mevalonate from acetyl-CoA: step 1/3.</text>
</comment>
<comment type="subunit">
    <text evidence="2 3 4">Homotetramer.</text>
</comment>
<comment type="subcellular location">
    <subcellularLocation>
        <location>Cytoplasm</location>
    </subcellularLocation>
</comment>
<comment type="similarity">
    <text evidence="8">Belongs to the thiolase-like superfamily. Thiolase family.</text>
</comment>
<sequence length="392" mass="40473">MSTPSIVIASARTAVGSFNGAFANTPAHELGATVISAVLERAGVAAGEVNEVILGQVLPAGEGQNPARQAAMKAGVPQEATAWGMNQLCGSGLRAVALGMQQIATGDASIIVAGGMESMSMAPHCAHLAGGVKMGDFKMIDTMIKDGLTDAFYGYHMGTTAENVAKQWQLSRDEQDAFAVASQNKAEAAQKDGRFKDEIVPFIVKGRKGDITVDADEYIRHGATLDSMAKLRPAFDKEGTVTAGNASGLNDGAAAALLMSEAEASRRGIQPLGRIVSWATVGVDPKVMGTGPIPASRKALERAGWKIGDLDLVEANEAFAAQACAVNKDLGWDPSIVNVNGGAIAIGHPIGASGARILNTLLFEMKRRGARKGLATLCIGGGMGVAMCIESL</sequence>
<dbReference type="EC" id="2.3.1.9"/>
<dbReference type="EMBL" id="J02631">
    <property type="protein sequence ID" value="AAA27706.1"/>
    <property type="status" value="ALT_SEQ"/>
    <property type="molecule type" value="Genomic_DNA"/>
</dbReference>
<dbReference type="PIR" id="A26121">
    <property type="entry name" value="XXGZAC"/>
</dbReference>
<dbReference type="PDB" id="1DLU">
    <property type="method" value="X-ray"/>
    <property type="resolution" value="2.25 A"/>
    <property type="chains" value="A/B/C/D=5-392"/>
</dbReference>
<dbReference type="PDB" id="1DLV">
    <property type="method" value="X-ray"/>
    <property type="resolution" value="2.29 A"/>
    <property type="chains" value="A/B/C/D=5-392"/>
</dbReference>
<dbReference type="PDB" id="1DM3">
    <property type="method" value="X-ray"/>
    <property type="resolution" value="2.00 A"/>
    <property type="chains" value="A/B/C/D=5-392"/>
</dbReference>
<dbReference type="PDB" id="1M1O">
    <property type="method" value="X-ray"/>
    <property type="resolution" value="1.95 A"/>
    <property type="chains" value="A/B/C/D=2-392"/>
</dbReference>
<dbReference type="PDB" id="1M1T">
    <property type="method" value="X-ray"/>
    <property type="resolution" value="1.94 A"/>
    <property type="chains" value="A/B/C/D=2-392"/>
</dbReference>
<dbReference type="PDB" id="1M3K">
    <property type="method" value="X-ray"/>
    <property type="resolution" value="1.70 A"/>
    <property type="chains" value="A/B/C/D=2-392"/>
</dbReference>
<dbReference type="PDB" id="1M3Z">
    <property type="method" value="X-ray"/>
    <property type="resolution" value="1.87 A"/>
    <property type="chains" value="A/B/C/D=2-392"/>
</dbReference>
<dbReference type="PDB" id="1M4S">
    <property type="method" value="X-ray"/>
    <property type="resolution" value="1.87 A"/>
    <property type="chains" value="A/B/C/D=2-392"/>
</dbReference>
<dbReference type="PDB" id="1M4T">
    <property type="method" value="X-ray"/>
    <property type="resolution" value="1.77 A"/>
    <property type="chains" value="A/B/C/D=2-392"/>
</dbReference>
<dbReference type="PDB" id="1NL7">
    <property type="method" value="X-ray"/>
    <property type="resolution" value="1.90 A"/>
    <property type="chains" value="A/B/C/D=2-392"/>
</dbReference>
<dbReference type="PDB" id="1OU6">
    <property type="method" value="X-ray"/>
    <property type="resolution" value="2.07 A"/>
    <property type="chains" value="A/B/C/D=2-392"/>
</dbReference>
<dbReference type="PDB" id="1QFL">
    <property type="method" value="X-ray"/>
    <property type="resolution" value="1.92 A"/>
    <property type="chains" value="A/B/C/D=5-392"/>
</dbReference>
<dbReference type="PDB" id="2VTZ">
    <property type="method" value="X-ray"/>
    <property type="resolution" value="2.30 A"/>
    <property type="chains" value="A/B/C/D=2-392"/>
</dbReference>
<dbReference type="PDB" id="2VU0">
    <property type="method" value="X-ray"/>
    <property type="resolution" value="1.87 A"/>
    <property type="chains" value="A/B/C/D=2-392"/>
</dbReference>
<dbReference type="PDB" id="2VU1">
    <property type="method" value="X-ray"/>
    <property type="resolution" value="1.51 A"/>
    <property type="chains" value="A/B/C/D=12-392"/>
</dbReference>
<dbReference type="PDB" id="2VU2">
    <property type="method" value="X-ray"/>
    <property type="resolution" value="2.65 A"/>
    <property type="chains" value="A/B/C/D=2-392"/>
</dbReference>
<dbReference type="PDB" id="2WKT">
    <property type="method" value="X-ray"/>
    <property type="resolution" value="2.00 A"/>
    <property type="chains" value="A/B/C/D=2-392"/>
</dbReference>
<dbReference type="PDB" id="2WKU">
    <property type="method" value="X-ray"/>
    <property type="resolution" value="2.30 A"/>
    <property type="chains" value="A/B/C/D=2-392"/>
</dbReference>
<dbReference type="PDB" id="2WKV">
    <property type="method" value="X-ray"/>
    <property type="resolution" value="2.50 A"/>
    <property type="chains" value="A/B/C/D=2-392"/>
</dbReference>
<dbReference type="PDB" id="2WL4">
    <property type="method" value="X-ray"/>
    <property type="resolution" value="1.80 A"/>
    <property type="chains" value="A/B/C/D=2-392"/>
</dbReference>
<dbReference type="PDB" id="2WL5">
    <property type="method" value="X-ray"/>
    <property type="resolution" value="1.80 A"/>
    <property type="chains" value="A/B/C/D=2-392"/>
</dbReference>
<dbReference type="PDB" id="2WL6">
    <property type="method" value="X-ray"/>
    <property type="resolution" value="2.98 A"/>
    <property type="chains" value="A/B/C/D=2-392"/>
</dbReference>
<dbReference type="PDB" id="7LBZ">
    <property type="method" value="X-ray"/>
    <property type="resolution" value="2.60 A"/>
    <property type="chains" value="A/B/C/D=2-392"/>
</dbReference>
<dbReference type="PDB" id="7LCA">
    <property type="method" value="X-ray"/>
    <property type="resolution" value="2.00 A"/>
    <property type="chains" value="A/B/C/D=2-392"/>
</dbReference>
<dbReference type="PDB" id="7LCL">
    <property type="method" value="X-ray"/>
    <property type="resolution" value="2.29 A"/>
    <property type="chains" value="A/B/C/D=2-392"/>
</dbReference>
<dbReference type="PDB" id="7LD2">
    <property type="method" value="X-ray"/>
    <property type="resolution" value="2.80 A"/>
    <property type="chains" value="A/B/C/D=2-392"/>
</dbReference>
<dbReference type="PDB" id="7LDC">
    <property type="method" value="X-ray"/>
    <property type="resolution" value="2.50 A"/>
    <property type="chains" value="A/B/C/D=2-392"/>
</dbReference>
<dbReference type="PDB" id="7LDT">
    <property type="method" value="X-ray"/>
    <property type="resolution" value="2.60 A"/>
    <property type="chains" value="A/B/C/D=2-392"/>
</dbReference>
<dbReference type="PDB" id="7LDU">
    <property type="method" value="X-ray"/>
    <property type="resolution" value="2.85 A"/>
    <property type="chains" value="A/B/C/D=2-392"/>
</dbReference>
<dbReference type="PDB" id="7LDV">
    <property type="method" value="X-ray"/>
    <property type="resolution" value="2.90 A"/>
    <property type="chains" value="A/B/C/D=2-392"/>
</dbReference>
<dbReference type="PDB" id="7LDW">
    <property type="method" value="X-ray"/>
    <property type="resolution" value="2.50 A"/>
    <property type="chains" value="A/B/C/D=2-392"/>
</dbReference>
<dbReference type="PDBsum" id="1DLU"/>
<dbReference type="PDBsum" id="1DLV"/>
<dbReference type="PDBsum" id="1DM3"/>
<dbReference type="PDBsum" id="1M1O"/>
<dbReference type="PDBsum" id="1M1T"/>
<dbReference type="PDBsum" id="1M3K"/>
<dbReference type="PDBsum" id="1M3Z"/>
<dbReference type="PDBsum" id="1M4S"/>
<dbReference type="PDBsum" id="1M4T"/>
<dbReference type="PDBsum" id="1NL7"/>
<dbReference type="PDBsum" id="1OU6"/>
<dbReference type="PDBsum" id="1QFL"/>
<dbReference type="PDBsum" id="2VTZ"/>
<dbReference type="PDBsum" id="2VU0"/>
<dbReference type="PDBsum" id="2VU1"/>
<dbReference type="PDBsum" id="2VU2"/>
<dbReference type="PDBsum" id="2WKT"/>
<dbReference type="PDBsum" id="2WKU"/>
<dbReference type="PDBsum" id="2WKV"/>
<dbReference type="PDBsum" id="2WL4"/>
<dbReference type="PDBsum" id="2WL5"/>
<dbReference type="PDBsum" id="2WL6"/>
<dbReference type="PDBsum" id="7LBZ"/>
<dbReference type="PDBsum" id="7LCA"/>
<dbReference type="PDBsum" id="7LCL"/>
<dbReference type="PDBsum" id="7LD2"/>
<dbReference type="PDBsum" id="7LDC"/>
<dbReference type="PDBsum" id="7LDT"/>
<dbReference type="PDBsum" id="7LDU"/>
<dbReference type="PDBsum" id="7LDV"/>
<dbReference type="PDBsum" id="7LDW"/>
<dbReference type="SMR" id="P07097"/>
<dbReference type="DrugBank" id="DB08408">
    <property type="generic name" value="(3R)-3-hydroxy-2,2-dimethyl-4-oxo-4-({3-oxo-3-[(2-sulfanylethyl)amino]propyl}amino)butyl 2,2-dimethylpropanoate"/>
</dbReference>
<dbReference type="DrugBank" id="DB03059">
    <property type="generic name" value="Acetoacetyl-CoA"/>
</dbReference>
<dbReference type="DrugBank" id="DB01992">
    <property type="generic name" value="Coenzyme A"/>
</dbReference>
<dbReference type="DrugBank" id="DB08328">
    <property type="generic name" value="PANTOTHENYL-AMINOETHANOL-11-PIVALIC ACID"/>
</dbReference>
<dbReference type="DrugBank" id="DB03045">
    <property type="generic name" value="Pantothenyl-Aminoethanol-Acetate Pivalic Acid"/>
</dbReference>
<dbReference type="DrugBank" id="DB02039">
    <property type="generic name" value="S-Acetyl-Cysteine"/>
</dbReference>
<dbReference type="DrugBank" id="DB02160">
    <property type="generic name" value="S-Butyryl-Cystein"/>
</dbReference>
<dbReference type="DrugBank" id="DB01915">
    <property type="generic name" value="S-Hydroxycysteine"/>
</dbReference>
<dbReference type="BRENDA" id="2.3.1.9">
    <property type="organism ID" value="6758"/>
</dbReference>
<dbReference type="SABIO-RK" id="P07097"/>
<dbReference type="UniPathway" id="UPA00058">
    <property type="reaction ID" value="UER00101"/>
</dbReference>
<dbReference type="UniPathway" id="UPA00917"/>
<dbReference type="EvolutionaryTrace" id="P07097"/>
<dbReference type="GO" id="GO:0005737">
    <property type="term" value="C:cytoplasm"/>
    <property type="evidence" value="ECO:0007669"/>
    <property type="project" value="UniProtKB-SubCell"/>
</dbReference>
<dbReference type="GO" id="GO:0003985">
    <property type="term" value="F:acetyl-CoA C-acetyltransferase activity"/>
    <property type="evidence" value="ECO:0007669"/>
    <property type="project" value="UniProtKB-EC"/>
</dbReference>
<dbReference type="GO" id="GO:0042619">
    <property type="term" value="P:poly-hydroxybutyrate biosynthetic process"/>
    <property type="evidence" value="ECO:0007669"/>
    <property type="project" value="UniProtKB-KW"/>
</dbReference>
<dbReference type="CDD" id="cd00751">
    <property type="entry name" value="thiolase"/>
    <property type="match status" value="1"/>
</dbReference>
<dbReference type="FunFam" id="3.40.47.10:FF:000010">
    <property type="entry name" value="Acetyl-CoA acetyltransferase (Thiolase)"/>
    <property type="match status" value="1"/>
</dbReference>
<dbReference type="Gene3D" id="3.40.47.10">
    <property type="match status" value="2"/>
</dbReference>
<dbReference type="InterPro" id="IPR002155">
    <property type="entry name" value="Thiolase"/>
</dbReference>
<dbReference type="InterPro" id="IPR016039">
    <property type="entry name" value="Thiolase-like"/>
</dbReference>
<dbReference type="InterPro" id="IPR020615">
    <property type="entry name" value="Thiolase_acyl_enz_int_AS"/>
</dbReference>
<dbReference type="InterPro" id="IPR020610">
    <property type="entry name" value="Thiolase_AS"/>
</dbReference>
<dbReference type="InterPro" id="IPR020617">
    <property type="entry name" value="Thiolase_C"/>
</dbReference>
<dbReference type="InterPro" id="IPR020613">
    <property type="entry name" value="Thiolase_CS"/>
</dbReference>
<dbReference type="InterPro" id="IPR020616">
    <property type="entry name" value="Thiolase_N"/>
</dbReference>
<dbReference type="NCBIfam" id="TIGR01930">
    <property type="entry name" value="AcCoA-C-Actrans"/>
    <property type="match status" value="1"/>
</dbReference>
<dbReference type="PANTHER" id="PTHR18919:SF107">
    <property type="entry name" value="ACETYL-COA ACETYLTRANSFERASE, CYTOSOLIC"/>
    <property type="match status" value="1"/>
</dbReference>
<dbReference type="PANTHER" id="PTHR18919">
    <property type="entry name" value="ACETYL-COA C-ACYLTRANSFERASE"/>
    <property type="match status" value="1"/>
</dbReference>
<dbReference type="Pfam" id="PF02803">
    <property type="entry name" value="Thiolase_C"/>
    <property type="match status" value="1"/>
</dbReference>
<dbReference type="Pfam" id="PF00108">
    <property type="entry name" value="Thiolase_N"/>
    <property type="match status" value="1"/>
</dbReference>
<dbReference type="PIRSF" id="PIRSF000429">
    <property type="entry name" value="Ac-CoA_Ac_transf"/>
    <property type="match status" value="1"/>
</dbReference>
<dbReference type="SUPFAM" id="SSF53901">
    <property type="entry name" value="Thiolase-like"/>
    <property type="match status" value="2"/>
</dbReference>
<dbReference type="PROSITE" id="PS00098">
    <property type="entry name" value="THIOLASE_1"/>
    <property type="match status" value="1"/>
</dbReference>
<dbReference type="PROSITE" id="PS00737">
    <property type="entry name" value="THIOLASE_2"/>
    <property type="match status" value="1"/>
</dbReference>
<dbReference type="PROSITE" id="PS00099">
    <property type="entry name" value="THIOLASE_3"/>
    <property type="match status" value="1"/>
</dbReference>
<evidence type="ECO:0000255" key="1">
    <source>
        <dbReference type="PROSITE-ProRule" id="PRU10020"/>
    </source>
</evidence>
<evidence type="ECO:0000269" key="2">
    <source>
    </source>
</evidence>
<evidence type="ECO:0000269" key="3">
    <source>
    </source>
</evidence>
<evidence type="ECO:0000269" key="4">
    <source>
    </source>
</evidence>
<evidence type="ECO:0000269" key="5">
    <source>
    </source>
</evidence>
<evidence type="ECO:0000303" key="6">
    <source>
    </source>
</evidence>
<evidence type="ECO:0000303" key="7">
    <source>
    </source>
</evidence>
<evidence type="ECO:0000305" key="8"/>
<evidence type="ECO:0007829" key="9">
    <source>
        <dbReference type="PDB" id="1M3K"/>
    </source>
</evidence>
<evidence type="ECO:0007829" key="10">
    <source>
        <dbReference type="PDB" id="2VU1"/>
    </source>
</evidence>
<evidence type="ECO:0007829" key="11">
    <source>
        <dbReference type="PDB" id="2WL4"/>
    </source>
</evidence>
<evidence type="ECO:0007829" key="12">
    <source>
        <dbReference type="PDB" id="7LCA"/>
    </source>
</evidence>
<gene>
    <name evidence="6" type="primary">phaA</name>
    <name evidence="7" type="synonym">phbA</name>
</gene>
<reference key="1">
    <citation type="journal article" date="1987" name="J. Biol. Chem.">
        <title>Biosynthetic thiolase from Zoogloea ramigera. III. Isolation and characterization of the structural gene.</title>
        <authorList>
            <person name="Peoples O.P."/>
            <person name="Masamune S."/>
            <person name="Walsh C.T."/>
            <person name="Sinskey A.J."/>
        </authorList>
    </citation>
    <scope>NUCLEOTIDE SEQUENCE [GENOMIC DNA]</scope>
    <source>
        <strain>ATCC 19623 / DSM 287 / JCM 20728 / IAM 12669 / NBRC 102405 / NCIMB 10340 / NCTC 10482 / NRRL B-3303 / I-16-M</strain>
    </source>
</reference>
<reference key="2">
    <citation type="journal article" date="1989" name="J. Biol. Chem.">
        <title>Poly-beta-hydroxybutyrate biosynthesis in Alcaligenes eutrophus H16. Characterization of the genes encoding beta-ketothiolase and acetoacetyl-CoA reductase.</title>
        <authorList>
            <person name="Peoples O.P."/>
            <person name="Sinskey A.J."/>
        </authorList>
    </citation>
    <scope>SEQUENCE REVISION TO 131</scope>
</reference>
<reference key="3">
    <citation type="journal article" date="1991" name="J. Biol. Chem.">
        <title>Biosynthetic thiolase from Zoogloea ramigera. Evidence for a mechanism involving Cys-378 as the active site base.</title>
        <authorList>
            <person name="Palmer M.A.J."/>
            <person name="Differding E."/>
            <person name="Gamboni R."/>
            <person name="Williams S.F."/>
            <person name="Peoples O.P."/>
            <person name="Walsh C.T."/>
            <person name="Sinskey S.J."/>
            <person name="Masamune S."/>
        </authorList>
    </citation>
    <scope>MUTAGENESIS OF CYS-378</scope>
</reference>
<reference key="4">
    <citation type="journal article" date="1992" name="FEMS Microbiol. Rev.">
        <title>Molecular basis for biosynthesis and accumulation of polyhydroxyalkanoic acids in bacteria.</title>
        <authorList>
            <person name="Steinbuechel A."/>
            <person name="Hustede E."/>
            <person name="Liebergesell M."/>
            <person name="Pieper U."/>
            <person name="Timm A."/>
            <person name="Valentin H."/>
        </authorList>
    </citation>
    <scope>GENE NAME</scope>
</reference>
<reference key="5">
    <citation type="journal article" date="2000" name="J. Mol. Biol.">
        <title>Crystallographic analysis of the reaction pathway of Zoogloea ramigera biosynthetic thiolase.</title>
        <authorList>
            <person name="Modis Y."/>
            <person name="Wierenga R.K."/>
        </authorList>
    </citation>
    <scope>X-RAY CRYSTALLOGRAPHY (2.25 ANGSTROMS)</scope>
</reference>
<reference key="6">
    <citation type="journal article" date="1999" name="Structure">
        <title>A biosynthetic thiolase in complex with a reaction intermediate: the crystal structure provides new insights into the catalytic mechanism.</title>
        <authorList>
            <person name="Modis Y."/>
            <person name="Wierenga R.K."/>
        </authorList>
    </citation>
    <scope>X-RAY CRYSTALLOGRAPHY (1.92 ANGSTROMS) OF THE THIOESTER INTERMEDIATE AND OF COMPLEX WITH SUBSTRATE</scope>
</reference>
<reference key="7">
    <citation type="journal article" date="2002" name="Biochemistry">
        <title>The catalytic cycle of biosynthetic thiolase: a conformational journey of an acetyl group through four binding modes and two oxyanion holes.</title>
        <authorList>
            <person name="Kursula P."/>
            <person name="Ojala J."/>
            <person name="Lambeir A.-M."/>
            <person name="Wierenga R.K."/>
        </authorList>
    </citation>
    <scope>X-RAY CRYSTALLOGRAPHY (1.7 ANGSTROMS) OF THE THIOESTER INTERMEDIATE; OF COMPLEX WITH SUBSTRATE AND OF MUTANTS ALA-64 AND ALA-89</scope>
    <scope>MUTAGENESIS OF GLN-64 AND CYS-89</scope>
</reference>
<name>THIL_SHIZO</name>